<feature type="chain" id="PRO_0000195158" description="Dynein light chain Tctex-type 3">
    <location>
        <begin position="1"/>
        <end position="116"/>
    </location>
</feature>
<feature type="modified residue" description="3'-nitrotyrosine" evidence="2">
    <location>
        <position position="4"/>
    </location>
</feature>
<name>DYLT3_HUMAN</name>
<sequence>MEEYHRHCDEVGFNAEEAHNIVKECVDGVLGGEDYNHNNINQWTASIVEQSLTHLVKLGKAYKYIVTCAVVQKSAYGFHTASSCFWDTTSDGTCTVRWENRTMNCIVNVFAIAIVL</sequence>
<protein>
    <recommendedName>
        <fullName>Dynein light chain Tctex-type 3</fullName>
    </recommendedName>
    <alternativeName>
        <fullName>Protein 91/23</fullName>
    </alternativeName>
    <alternativeName>
        <fullName>T-complex-associated testis-expressed 1-like</fullName>
    </alternativeName>
</protein>
<dbReference type="EMBL" id="U02556">
    <property type="protein sequence ID" value="AAA57444.1"/>
    <property type="molecule type" value="mRNA"/>
</dbReference>
<dbReference type="EMBL" id="AK311851">
    <property type="protein sequence ID" value="BAG34793.1"/>
    <property type="molecule type" value="mRNA"/>
</dbReference>
<dbReference type="EMBL" id="CR450320">
    <property type="protein sequence ID" value="CAG29316.1"/>
    <property type="molecule type" value="mRNA"/>
</dbReference>
<dbReference type="EMBL" id="CR542213">
    <property type="protein sequence ID" value="CAG47009.1"/>
    <property type="molecule type" value="mRNA"/>
</dbReference>
<dbReference type="EMBL" id="CH471141">
    <property type="protein sequence ID" value="EAW59452.1"/>
    <property type="molecule type" value="Genomic_DNA"/>
</dbReference>
<dbReference type="EMBL" id="BC000968">
    <property type="protein sequence ID" value="AAH00968.1"/>
    <property type="molecule type" value="mRNA"/>
</dbReference>
<dbReference type="CCDS" id="CCDS14243.1"/>
<dbReference type="PIR" id="I38410">
    <property type="entry name" value="I38410"/>
</dbReference>
<dbReference type="RefSeq" id="NP_006511.1">
    <property type="nucleotide sequence ID" value="NM_006520.3"/>
</dbReference>
<dbReference type="SMR" id="P51808"/>
<dbReference type="BioGRID" id="112850">
    <property type="interactions" value="35"/>
</dbReference>
<dbReference type="CORUM" id="P51808"/>
<dbReference type="FunCoup" id="P51808">
    <property type="interactions" value="97"/>
</dbReference>
<dbReference type="IntAct" id="P51808">
    <property type="interactions" value="23"/>
</dbReference>
<dbReference type="STRING" id="9606.ENSP00000367841"/>
<dbReference type="CarbonylDB" id="P51808"/>
<dbReference type="GlyGen" id="P51808">
    <property type="glycosylation" value="1 site, 1 O-linked glycan (1 site)"/>
</dbReference>
<dbReference type="iPTMnet" id="P51808"/>
<dbReference type="PhosphoSitePlus" id="P51808"/>
<dbReference type="SwissPalm" id="P51808"/>
<dbReference type="BioMuta" id="DYNLT3"/>
<dbReference type="jPOST" id="P51808"/>
<dbReference type="MassIVE" id="P51808"/>
<dbReference type="PaxDb" id="9606-ENSP00000367841"/>
<dbReference type="PeptideAtlas" id="P51808"/>
<dbReference type="ProteomicsDB" id="56402"/>
<dbReference type="Pumba" id="P51808"/>
<dbReference type="Antibodypedia" id="10567">
    <property type="antibodies" value="99 antibodies from 24 providers"/>
</dbReference>
<dbReference type="DNASU" id="6990"/>
<dbReference type="Ensembl" id="ENST00000378578.9">
    <property type="protein sequence ID" value="ENSP00000367841.4"/>
    <property type="gene ID" value="ENSG00000165169.11"/>
</dbReference>
<dbReference type="GeneID" id="6990"/>
<dbReference type="KEGG" id="hsa:6990"/>
<dbReference type="MANE-Select" id="ENST00000378578.9">
    <property type="protein sequence ID" value="ENSP00000367841.4"/>
    <property type="RefSeq nucleotide sequence ID" value="NM_006520.3"/>
    <property type="RefSeq protein sequence ID" value="NP_006511.1"/>
</dbReference>
<dbReference type="UCSC" id="uc004dds.4">
    <property type="organism name" value="human"/>
</dbReference>
<dbReference type="AGR" id="HGNC:11694"/>
<dbReference type="CTD" id="6990"/>
<dbReference type="DisGeNET" id="6990"/>
<dbReference type="GeneCards" id="DYNLT3"/>
<dbReference type="HGNC" id="HGNC:11694">
    <property type="gene designation" value="DYNLT3"/>
</dbReference>
<dbReference type="HPA" id="ENSG00000165169">
    <property type="expression patterns" value="Low tissue specificity"/>
</dbReference>
<dbReference type="MIM" id="300302">
    <property type="type" value="gene"/>
</dbReference>
<dbReference type="neXtProt" id="NX_P51808"/>
<dbReference type="OpenTargets" id="ENSG00000165169"/>
<dbReference type="PharmGKB" id="PA36414"/>
<dbReference type="VEuPathDB" id="HostDB:ENSG00000165169"/>
<dbReference type="eggNOG" id="KOG4081">
    <property type="taxonomic scope" value="Eukaryota"/>
</dbReference>
<dbReference type="GeneTree" id="ENSGT00940000155009"/>
<dbReference type="HOGENOM" id="CLU_097204_7_0_1"/>
<dbReference type="InParanoid" id="P51808"/>
<dbReference type="OMA" id="HNDEMTF"/>
<dbReference type="OrthoDB" id="10059120at2759"/>
<dbReference type="PAN-GO" id="P51808">
    <property type="GO annotations" value="4 GO annotations based on evolutionary models"/>
</dbReference>
<dbReference type="PhylomeDB" id="P51808"/>
<dbReference type="TreeFam" id="TF313904"/>
<dbReference type="PathwayCommons" id="P51808"/>
<dbReference type="SignaLink" id="P51808"/>
<dbReference type="BioGRID-ORCS" id="6990">
    <property type="hits" value="10 hits in 783 CRISPR screens"/>
</dbReference>
<dbReference type="ChiTaRS" id="DYNLT3">
    <property type="organism name" value="human"/>
</dbReference>
<dbReference type="GeneWiki" id="DYNLT3"/>
<dbReference type="GenomeRNAi" id="6990"/>
<dbReference type="Pharos" id="P51808">
    <property type="development level" value="Tbio"/>
</dbReference>
<dbReference type="PRO" id="PR:P51808"/>
<dbReference type="Proteomes" id="UP000005640">
    <property type="component" value="Chromosome X"/>
</dbReference>
<dbReference type="RNAct" id="P51808">
    <property type="molecule type" value="protein"/>
</dbReference>
<dbReference type="Bgee" id="ENSG00000165169">
    <property type="expression patterns" value="Expressed in gingiva and 212 other cell types or tissues"/>
</dbReference>
<dbReference type="ExpressionAtlas" id="P51808">
    <property type="expression patterns" value="baseline and differential"/>
</dbReference>
<dbReference type="GO" id="GO:0005737">
    <property type="term" value="C:cytoplasm"/>
    <property type="evidence" value="ECO:0000318"/>
    <property type="project" value="GO_Central"/>
</dbReference>
<dbReference type="GO" id="GO:0005868">
    <property type="term" value="C:cytoplasmic dynein complex"/>
    <property type="evidence" value="ECO:0000314"/>
    <property type="project" value="UniProtKB"/>
</dbReference>
<dbReference type="GO" id="GO:0000776">
    <property type="term" value="C:kinetochore"/>
    <property type="evidence" value="ECO:0007669"/>
    <property type="project" value="UniProtKB-KW"/>
</dbReference>
<dbReference type="GO" id="GO:0061673">
    <property type="term" value="C:mitotic spindle astral microtubule"/>
    <property type="evidence" value="ECO:0007669"/>
    <property type="project" value="Ensembl"/>
</dbReference>
<dbReference type="GO" id="GO:0005634">
    <property type="term" value="C:nucleus"/>
    <property type="evidence" value="ECO:0007669"/>
    <property type="project" value="UniProtKB-SubCell"/>
</dbReference>
<dbReference type="GO" id="GO:0045505">
    <property type="term" value="F:dynein intermediate chain binding"/>
    <property type="evidence" value="ECO:0000318"/>
    <property type="project" value="GO_Central"/>
</dbReference>
<dbReference type="GO" id="GO:0042802">
    <property type="term" value="F:identical protein binding"/>
    <property type="evidence" value="ECO:0000353"/>
    <property type="project" value="IntAct"/>
</dbReference>
<dbReference type="GO" id="GO:0051301">
    <property type="term" value="P:cell division"/>
    <property type="evidence" value="ECO:0007669"/>
    <property type="project" value="UniProtKB-KW"/>
</dbReference>
<dbReference type="GO" id="GO:0007018">
    <property type="term" value="P:microtubule-based movement"/>
    <property type="evidence" value="ECO:0000318"/>
    <property type="project" value="GO_Central"/>
</dbReference>
<dbReference type="GO" id="GO:0045931">
    <property type="term" value="P:positive regulation of mitotic cell cycle"/>
    <property type="evidence" value="ECO:0007669"/>
    <property type="project" value="Ensembl"/>
</dbReference>
<dbReference type="GO" id="GO:0007346">
    <property type="term" value="P:regulation of mitotic cell cycle"/>
    <property type="evidence" value="ECO:0000250"/>
    <property type="project" value="UniProtKB"/>
</dbReference>
<dbReference type="CDD" id="cd21463">
    <property type="entry name" value="DLC-like_DYNLT3"/>
    <property type="match status" value="1"/>
</dbReference>
<dbReference type="FunFam" id="3.30.1140.40:FF:000002">
    <property type="entry name" value="Dynein light chain Tctex-type 3"/>
    <property type="match status" value="1"/>
</dbReference>
<dbReference type="Gene3D" id="3.30.1140.40">
    <property type="entry name" value="Tctex-1"/>
    <property type="match status" value="1"/>
</dbReference>
<dbReference type="InterPro" id="IPR005334">
    <property type="entry name" value="Tctex-1-like"/>
</dbReference>
<dbReference type="InterPro" id="IPR038586">
    <property type="entry name" value="Tctex-1-like_sf"/>
</dbReference>
<dbReference type="PANTHER" id="PTHR21255:SF20">
    <property type="entry name" value="DYNEIN LIGHT CHAIN TCTEX-TYPE 3"/>
    <property type="match status" value="1"/>
</dbReference>
<dbReference type="PANTHER" id="PTHR21255">
    <property type="entry name" value="T-COMPLEX-ASSOCIATED-TESTIS-EXPRESSED 1/ DYNEIN LIGHT CHAIN"/>
    <property type="match status" value="1"/>
</dbReference>
<dbReference type="Pfam" id="PF03645">
    <property type="entry name" value="Tctex-1"/>
    <property type="match status" value="1"/>
</dbReference>
<keyword id="KW-0131">Cell cycle</keyword>
<keyword id="KW-0132">Cell division</keyword>
<keyword id="KW-0137">Centromere</keyword>
<keyword id="KW-0158">Chromosome</keyword>
<keyword id="KW-0963">Cytoplasm</keyword>
<keyword id="KW-0206">Cytoskeleton</keyword>
<keyword id="KW-0243">Dynein</keyword>
<keyword id="KW-0995">Kinetochore</keyword>
<keyword id="KW-0493">Microtubule</keyword>
<keyword id="KW-0498">Mitosis</keyword>
<keyword id="KW-0505">Motor protein</keyword>
<keyword id="KW-0944">Nitration</keyword>
<keyword id="KW-0539">Nucleus</keyword>
<keyword id="KW-1267">Proteomics identification</keyword>
<keyword id="KW-1185">Reference proteome</keyword>
<keyword id="KW-0813">Transport</keyword>
<reference key="1">
    <citation type="journal article" date="1994" name="Hum. Mol. Genet.">
        <title>Identification of a gene from Xp21 with similarity to the tctex-1 gene of the murine t complex.</title>
        <authorList>
            <person name="Roux A.-F."/>
            <person name="Rommens J."/>
            <person name="McDowell C."/>
            <person name="Anson-Cartwright L."/>
            <person name="Bell S."/>
            <person name="Schappert K.T."/>
            <person name="Fishman G.A."/>
            <person name="Musarella M."/>
        </authorList>
    </citation>
    <scope>NUCLEOTIDE SEQUENCE [MRNA]</scope>
</reference>
<reference key="2">
    <citation type="journal article" date="2004" name="Nat. Genet.">
        <title>Complete sequencing and characterization of 21,243 full-length human cDNAs.</title>
        <authorList>
            <person name="Ota T."/>
            <person name="Suzuki Y."/>
            <person name="Nishikawa T."/>
            <person name="Otsuki T."/>
            <person name="Sugiyama T."/>
            <person name="Irie R."/>
            <person name="Wakamatsu A."/>
            <person name="Hayashi K."/>
            <person name="Sato H."/>
            <person name="Nagai K."/>
            <person name="Kimura K."/>
            <person name="Makita H."/>
            <person name="Sekine M."/>
            <person name="Obayashi M."/>
            <person name="Nishi T."/>
            <person name="Shibahara T."/>
            <person name="Tanaka T."/>
            <person name="Ishii S."/>
            <person name="Yamamoto J."/>
            <person name="Saito K."/>
            <person name="Kawai Y."/>
            <person name="Isono Y."/>
            <person name="Nakamura Y."/>
            <person name="Nagahari K."/>
            <person name="Murakami K."/>
            <person name="Yasuda T."/>
            <person name="Iwayanagi T."/>
            <person name="Wagatsuma M."/>
            <person name="Shiratori A."/>
            <person name="Sudo H."/>
            <person name="Hosoiri T."/>
            <person name="Kaku Y."/>
            <person name="Kodaira H."/>
            <person name="Kondo H."/>
            <person name="Sugawara M."/>
            <person name="Takahashi M."/>
            <person name="Kanda K."/>
            <person name="Yokoi T."/>
            <person name="Furuya T."/>
            <person name="Kikkawa E."/>
            <person name="Omura Y."/>
            <person name="Abe K."/>
            <person name="Kamihara K."/>
            <person name="Katsuta N."/>
            <person name="Sato K."/>
            <person name="Tanikawa M."/>
            <person name="Yamazaki M."/>
            <person name="Ninomiya K."/>
            <person name="Ishibashi T."/>
            <person name="Yamashita H."/>
            <person name="Murakawa K."/>
            <person name="Fujimori K."/>
            <person name="Tanai H."/>
            <person name="Kimata M."/>
            <person name="Watanabe M."/>
            <person name="Hiraoka S."/>
            <person name="Chiba Y."/>
            <person name="Ishida S."/>
            <person name="Ono Y."/>
            <person name="Takiguchi S."/>
            <person name="Watanabe S."/>
            <person name="Yosida M."/>
            <person name="Hotuta T."/>
            <person name="Kusano J."/>
            <person name="Kanehori K."/>
            <person name="Takahashi-Fujii A."/>
            <person name="Hara H."/>
            <person name="Tanase T.-O."/>
            <person name="Nomura Y."/>
            <person name="Togiya S."/>
            <person name="Komai F."/>
            <person name="Hara R."/>
            <person name="Takeuchi K."/>
            <person name="Arita M."/>
            <person name="Imose N."/>
            <person name="Musashino K."/>
            <person name="Yuuki H."/>
            <person name="Oshima A."/>
            <person name="Sasaki N."/>
            <person name="Aotsuka S."/>
            <person name="Yoshikawa Y."/>
            <person name="Matsunawa H."/>
            <person name="Ichihara T."/>
            <person name="Shiohata N."/>
            <person name="Sano S."/>
            <person name="Moriya S."/>
            <person name="Momiyama H."/>
            <person name="Satoh N."/>
            <person name="Takami S."/>
            <person name="Terashima Y."/>
            <person name="Suzuki O."/>
            <person name="Nakagawa S."/>
            <person name="Senoh A."/>
            <person name="Mizoguchi H."/>
            <person name="Goto Y."/>
            <person name="Shimizu F."/>
            <person name="Wakebe H."/>
            <person name="Hishigaki H."/>
            <person name="Watanabe T."/>
            <person name="Sugiyama A."/>
            <person name="Takemoto M."/>
            <person name="Kawakami B."/>
            <person name="Yamazaki M."/>
            <person name="Watanabe K."/>
            <person name="Kumagai A."/>
            <person name="Itakura S."/>
            <person name="Fukuzumi Y."/>
            <person name="Fujimori Y."/>
            <person name="Komiyama M."/>
            <person name="Tashiro H."/>
            <person name="Tanigami A."/>
            <person name="Fujiwara T."/>
            <person name="Ono T."/>
            <person name="Yamada K."/>
            <person name="Fujii Y."/>
            <person name="Ozaki K."/>
            <person name="Hirao M."/>
            <person name="Ohmori Y."/>
            <person name="Kawabata A."/>
            <person name="Hikiji T."/>
            <person name="Kobatake N."/>
            <person name="Inagaki H."/>
            <person name="Ikema Y."/>
            <person name="Okamoto S."/>
            <person name="Okitani R."/>
            <person name="Kawakami T."/>
            <person name="Noguchi S."/>
            <person name="Itoh T."/>
            <person name="Shigeta K."/>
            <person name="Senba T."/>
            <person name="Matsumura K."/>
            <person name="Nakajima Y."/>
            <person name="Mizuno T."/>
            <person name="Morinaga M."/>
            <person name="Sasaki M."/>
            <person name="Togashi T."/>
            <person name="Oyama M."/>
            <person name="Hata H."/>
            <person name="Watanabe M."/>
            <person name="Komatsu T."/>
            <person name="Mizushima-Sugano J."/>
            <person name="Satoh T."/>
            <person name="Shirai Y."/>
            <person name="Takahashi Y."/>
            <person name="Nakagawa K."/>
            <person name="Okumura K."/>
            <person name="Nagase T."/>
            <person name="Nomura N."/>
            <person name="Kikuchi H."/>
            <person name="Masuho Y."/>
            <person name="Yamashita R."/>
            <person name="Nakai K."/>
            <person name="Yada T."/>
            <person name="Nakamura Y."/>
            <person name="Ohara O."/>
            <person name="Isogai T."/>
            <person name="Sugano S."/>
        </authorList>
    </citation>
    <scope>NUCLEOTIDE SEQUENCE [LARGE SCALE MRNA]</scope>
    <source>
        <tissue>Subthalamic nucleus</tissue>
    </source>
</reference>
<reference key="3">
    <citation type="submission" date="2004-06" db="EMBL/GenBank/DDBJ databases">
        <title>Cloning of human full open reading frames in Gateway(TM) system entry vector (pDONR201).</title>
        <authorList>
            <person name="Ebert L."/>
            <person name="Schick M."/>
            <person name="Neubert P."/>
            <person name="Schatten R."/>
            <person name="Henze S."/>
            <person name="Korn B."/>
        </authorList>
    </citation>
    <scope>NUCLEOTIDE SEQUENCE [LARGE SCALE MRNA]</scope>
</reference>
<reference key="4">
    <citation type="submission" date="2005-09" db="EMBL/GenBank/DDBJ databases">
        <authorList>
            <person name="Mural R.J."/>
            <person name="Istrail S."/>
            <person name="Sutton G."/>
            <person name="Florea L."/>
            <person name="Halpern A.L."/>
            <person name="Mobarry C.M."/>
            <person name="Lippert R."/>
            <person name="Walenz B."/>
            <person name="Shatkay H."/>
            <person name="Dew I."/>
            <person name="Miller J.R."/>
            <person name="Flanigan M.J."/>
            <person name="Edwards N.J."/>
            <person name="Bolanos R."/>
            <person name="Fasulo D."/>
            <person name="Halldorsson B.V."/>
            <person name="Hannenhalli S."/>
            <person name="Turner R."/>
            <person name="Yooseph S."/>
            <person name="Lu F."/>
            <person name="Nusskern D.R."/>
            <person name="Shue B.C."/>
            <person name="Zheng X.H."/>
            <person name="Zhong F."/>
            <person name="Delcher A.L."/>
            <person name="Huson D.H."/>
            <person name="Kravitz S.A."/>
            <person name="Mouchard L."/>
            <person name="Reinert K."/>
            <person name="Remington K.A."/>
            <person name="Clark A.G."/>
            <person name="Waterman M.S."/>
            <person name="Eichler E.E."/>
            <person name="Adams M.D."/>
            <person name="Hunkapiller M.W."/>
            <person name="Myers E.W."/>
            <person name="Venter J.C."/>
        </authorList>
    </citation>
    <scope>NUCLEOTIDE SEQUENCE [LARGE SCALE GENOMIC DNA]</scope>
</reference>
<reference key="5">
    <citation type="journal article" date="2004" name="Genome Res.">
        <title>The status, quality, and expansion of the NIH full-length cDNA project: the Mammalian Gene Collection (MGC).</title>
        <authorList>
            <consortium name="The MGC Project Team"/>
        </authorList>
    </citation>
    <scope>NUCLEOTIDE SEQUENCE [LARGE SCALE MRNA]</scope>
    <source>
        <tissue>Placenta</tissue>
    </source>
</reference>
<reference key="6">
    <citation type="journal article" date="2005" name="J. Cell Sci.">
        <title>Dynein light chain rp3 acts as a nuclear matrix-associated transcriptional modulator in a dynein-independent pathway.</title>
        <authorList>
            <person name="Yeh T.-Y."/>
            <person name="Chuang J.-Z."/>
            <person name="Sung C.-H."/>
        </authorList>
    </citation>
    <scope>INTERACTION WITH SATB1</scope>
    <scope>SUBCELLULAR LOCATION</scope>
</reference>
<reference key="7">
    <citation type="journal article" date="2007" name="J. Biol. Chem.">
        <title>The DYNLT3 light chain directly links cytoplasmic dynein to a spindle checkpoint protein, Bub3.</title>
        <authorList>
            <person name="Lo K.W."/>
            <person name="Kogoy J.M."/>
            <person name="Pfister K.K."/>
        </authorList>
    </citation>
    <scope>INTERACTION WITH BUB3</scope>
    <scope>SUBCELLULAR LOCATION</scope>
</reference>
<gene>
    <name type="primary">DYNLT3</name>
    <name type="synonym">TCTE1L</name>
    <name type="synonym">TCTE1XL</name>
</gene>
<comment type="function">
    <text evidence="1">Acts as one of several non-catalytic accessory components of the cytoplasmic dynein 1 complex that are thought to be involved in linking dynein to cargos and to adapter proteins that regulate dynein function. Cytoplasmic dynein 1 acts as a motor for the intracellular retrograde motility of vesicles and organelles along microtubules. Probably binds BUB3 as part of transport cargo. Required for the efficient progression through mitosis (By similarity).</text>
</comment>
<comment type="subunit">
    <text evidence="1 3 4">Homodimer. The cytoplasmic dynein 1 complex consists of two catalytic heavy chains (HCs) and a number of non-catalytic subunits presented by intermediate chains (ICs), light intermediate chains (LICs) and light chains (LCs); the composition seems to vary in respect to the IC, LIC and LC composition. The heavy chain homodimer serves as a scaffold for the probable homodimeric assembly of the respective non-catalytic subunits. The ICs and LICs bind directly to the HC dimer and the LCs assemble on the IC dimer. DYNLT1 and DYNLT3 compete for association with dynein IC (DYNC1I1 or DYNC1I2). Self-associates. Interacts with DYNC1I1 and DYNC1I2 (By similarity). Interacts with BUB3. Interacts with SATB1 in nucleus to form complex with matrix attachment regions (MARs) of DNA.</text>
</comment>
<comment type="interaction">
    <interactant intactId="EBI-743027">
        <id>P51808</id>
    </interactant>
    <interactant intactId="EBI-12904676">
        <id>Q8WU43</id>
        <label>C2orf15</label>
    </interactant>
    <organismsDiffer>false</organismsDiffer>
    <experiments>3</experiments>
</comment>
<comment type="interaction">
    <interactant intactId="EBI-743027">
        <id>P51808</id>
    </interactant>
    <interactant intactId="EBI-7783254">
        <id>Q9NRJ3</id>
        <label>CCL28</label>
    </interactant>
    <organismsDiffer>false</organismsDiffer>
    <experiments>3</experiments>
</comment>
<comment type="interaction">
    <interactant intactId="EBI-743027">
        <id>P51808</id>
    </interactant>
    <interactant intactId="EBI-742998">
        <id>Q13409</id>
        <label>DYNC1I2</label>
    </interactant>
    <organismsDiffer>false</organismsDiffer>
    <experiments>4</experiments>
</comment>
<comment type="interaction">
    <interactant intactId="EBI-743027">
        <id>P51808</id>
    </interactant>
    <interactant intactId="EBI-12094038">
        <id>Q13409-3</id>
        <label>DYNC1I2</label>
    </interactant>
    <organismsDiffer>false</organismsDiffer>
    <experiments>3</experiments>
</comment>
<comment type="interaction">
    <interactant intactId="EBI-743027">
        <id>P51808</id>
    </interactant>
    <interactant intactId="EBI-1176455">
        <id>P63172</id>
        <label>DYNLT1</label>
    </interactant>
    <organismsDiffer>false</organismsDiffer>
    <experiments>4</experiments>
</comment>
<comment type="interaction">
    <interactant intactId="EBI-743027">
        <id>P51808</id>
    </interactant>
    <interactant intactId="EBI-743027">
        <id>P51808</id>
        <label>DYNLT3</label>
    </interactant>
    <organismsDiffer>false</organismsDiffer>
    <experiments>7</experiments>
</comment>
<comment type="interaction">
    <interactant intactId="EBI-743027">
        <id>P51808</id>
    </interactant>
    <interactant intactId="EBI-740897">
        <id>Q9GZT8</id>
        <label>NIF3L1</label>
    </interactant>
    <organismsDiffer>false</organismsDiffer>
    <experiments>3</experiments>
</comment>
<comment type="interaction">
    <interactant intactId="EBI-743027">
        <id>P51808</id>
    </interactant>
    <interactant intactId="EBI-12402645">
        <id>P54277-2</id>
        <label>PMS1</label>
    </interactant>
    <organismsDiffer>false</organismsDiffer>
    <experiments>3</experiments>
</comment>
<comment type="interaction">
    <interactant intactId="EBI-743027">
        <id>P51808</id>
    </interactant>
    <interactant intactId="EBI-12147703">
        <id>Q6PJT7-6</id>
        <label>ZC3H14</label>
    </interactant>
    <organismsDiffer>false</organismsDiffer>
    <experiments>3</experiments>
</comment>
<comment type="subcellular location">
    <subcellularLocation>
        <location>Nucleus</location>
    </subcellularLocation>
    <subcellularLocation>
        <location>Cytoplasm</location>
        <location>Cytoskeleton</location>
    </subcellularLocation>
    <subcellularLocation>
        <location>Chromosome</location>
        <location>Centromere</location>
        <location>Kinetochore</location>
    </subcellularLocation>
    <text>Colocalizes with BUB3 at kinetochores specifically during prometaphase.</text>
</comment>
<comment type="similarity">
    <text evidence="5">Belongs to the dynein light chain Tctex-type family.</text>
</comment>
<comment type="caution">
    <text evidence="6">Was originally thought to be a candidate for RP3.</text>
</comment>
<accession>P51808</accession>
<accession>Q6ICS3</accession>
<evidence type="ECO:0000250" key="1"/>
<evidence type="ECO:0000250" key="2">
    <source>
        <dbReference type="UniProtKB" id="P56387"/>
    </source>
</evidence>
<evidence type="ECO:0000269" key="3">
    <source>
    </source>
</evidence>
<evidence type="ECO:0000269" key="4">
    <source>
    </source>
</evidence>
<evidence type="ECO:0000305" key="5"/>
<evidence type="ECO:0000305" key="6">
    <source>
    </source>
</evidence>
<organism>
    <name type="scientific">Homo sapiens</name>
    <name type="common">Human</name>
    <dbReference type="NCBI Taxonomy" id="9606"/>
    <lineage>
        <taxon>Eukaryota</taxon>
        <taxon>Metazoa</taxon>
        <taxon>Chordata</taxon>
        <taxon>Craniata</taxon>
        <taxon>Vertebrata</taxon>
        <taxon>Euteleostomi</taxon>
        <taxon>Mammalia</taxon>
        <taxon>Eutheria</taxon>
        <taxon>Euarchontoglires</taxon>
        <taxon>Primates</taxon>
        <taxon>Haplorrhini</taxon>
        <taxon>Catarrhini</taxon>
        <taxon>Hominidae</taxon>
        <taxon>Homo</taxon>
    </lineage>
</organism>
<proteinExistence type="evidence at protein level"/>